<organism>
    <name type="scientific">Pseudomonas putida</name>
    <name type="common">Arthrobacter siderocapsulatus</name>
    <dbReference type="NCBI Taxonomy" id="303"/>
    <lineage>
        <taxon>Bacteria</taxon>
        <taxon>Pseudomonadati</taxon>
        <taxon>Pseudomonadota</taxon>
        <taxon>Gammaproteobacteria</taxon>
        <taxon>Pseudomonadales</taxon>
        <taxon>Pseudomonadaceae</taxon>
        <taxon>Pseudomonas</taxon>
    </lineage>
</organism>
<proteinExistence type="inferred from homology"/>
<gene>
    <name type="primary">bnzE</name>
</gene>
<name>BNZE_PSEPU</name>
<reference key="1">
    <citation type="journal article" date="1987" name="J. Bacteriol.">
        <title>Nucleotide sequencing and characterization of the genes encoding benzene oxidation enzymes of Pseudomonas putida.</title>
        <authorList>
            <person name="Irie S."/>
            <person name="Doi S."/>
            <person name="Yorifuji T."/>
            <person name="Takagi M."/>
            <person name="Yano K."/>
        </authorList>
    </citation>
    <scope>NUCLEOTIDE SEQUENCE [GENOMIC DNA]</scope>
    <source>
        <strain>BE-81</strain>
    </source>
</reference>
<evidence type="ECO:0000250" key="1"/>
<evidence type="ECO:0000255" key="2">
    <source>
        <dbReference type="PROSITE-ProRule" id="PRU10001"/>
    </source>
</evidence>
<evidence type="ECO:0000305" key="3"/>
<protein>
    <recommendedName>
        <fullName>Cis-1,2-dihydrobenzene-1,2-diol dehydrogenase</fullName>
        <ecNumber>1.3.1.19</ecNumber>
    </recommendedName>
    <alternativeName>
        <fullName>Cis-benzene glycol dehydrogenase</fullName>
    </alternativeName>
</protein>
<feature type="chain" id="PRO_0000054530" description="Cis-1,2-dihydrobenzene-1,2-diol dehydrogenase">
    <location>
        <begin position="1"/>
        <end position="275"/>
    </location>
</feature>
<feature type="active site" description="Proton acceptor" evidence="2">
    <location>
        <position position="155"/>
    </location>
</feature>
<feature type="binding site" evidence="1">
    <location>
        <begin position="9"/>
        <end position="33"/>
    </location>
    <ligand>
        <name>NAD(+)</name>
        <dbReference type="ChEBI" id="CHEBI:57540"/>
    </ligand>
</feature>
<feature type="binding site" evidence="1">
    <location>
        <position position="142"/>
    </location>
    <ligand>
        <name>substrate</name>
    </ligand>
</feature>
<sequence>MRLEGEVALVTGGGAGLGRAIVDRYVAEGARVAVLDKSAAGLEALRKLHGDAIVGVEGDVRSLDSHREAVARCVEAFGKLDCLVGNAGVWDYLTQLVDIPDDLISEAFEEMFEVNVKGYILAAKAALPALYQSKGSAIFTVSNAGFYPGGGGVLYTAGKHAVIGLIKQLAHEWGPRIRVNGIAPGGILGSDLRGLKSLDLQDKSISTFPLDDMLKSVLPTGRAATAEEYAGAYVFFATRGDTVPLTGSVLNFDGGMGVRGLFEASLGAQLDKHFG</sequence>
<comment type="catalytic activity">
    <reaction>
        <text>cis-1,2-dihydrobenzene-1,2-diol + NAD(+) = catechol + NADH + H(+)</text>
        <dbReference type="Rhea" id="RHEA:15457"/>
        <dbReference type="ChEBI" id="CHEBI:15378"/>
        <dbReference type="ChEBI" id="CHEBI:16190"/>
        <dbReference type="ChEBI" id="CHEBI:18135"/>
        <dbReference type="ChEBI" id="CHEBI:57540"/>
        <dbReference type="ChEBI" id="CHEBI:57945"/>
        <dbReference type="EC" id="1.3.1.19"/>
    </reaction>
</comment>
<comment type="pathway">
    <text>Aromatic compound metabolism; benzene degradation; catechol from benzene: step 2/2.</text>
</comment>
<comment type="similarity">
    <text evidence="3">Belongs to the short-chain dehydrogenases/reductases (SDR) family.</text>
</comment>
<comment type="sequence caution" evidence="3">
    <conflict type="erroneous initiation">
        <sequence resource="EMBL-CDS" id="AAA25739"/>
    </conflict>
</comment>
<accession>P08088</accession>
<keyword id="KW-0058">Aromatic hydrocarbons catabolism</keyword>
<keyword id="KW-0520">NAD</keyword>
<keyword id="KW-0560">Oxidoreductase</keyword>
<dbReference type="EC" id="1.3.1.19"/>
<dbReference type="EMBL" id="M17904">
    <property type="protein sequence ID" value="AAA25739.1"/>
    <property type="status" value="ALT_INIT"/>
    <property type="molecule type" value="Genomic_DNA"/>
</dbReference>
<dbReference type="PIR" id="E36516">
    <property type="entry name" value="E36516"/>
</dbReference>
<dbReference type="SMR" id="P08088"/>
<dbReference type="UniPathway" id="UPA00272">
    <property type="reaction ID" value="UER00392"/>
</dbReference>
<dbReference type="GO" id="GO:0018504">
    <property type="term" value="F:cis-1,2-dihydrobenzene-1,2-diol dehydrogenase activity"/>
    <property type="evidence" value="ECO:0000314"/>
    <property type="project" value="CACAO"/>
</dbReference>
<dbReference type="GO" id="GO:0009056">
    <property type="term" value="P:catabolic process"/>
    <property type="evidence" value="ECO:0007669"/>
    <property type="project" value="UniProtKB-KW"/>
</dbReference>
<dbReference type="CDD" id="cd05348">
    <property type="entry name" value="BphB-like_SDR_c"/>
    <property type="match status" value="1"/>
</dbReference>
<dbReference type="FunFam" id="3.40.50.720:FF:000151">
    <property type="entry name" value="3-phenylpropionate-dihydrodiol/cinnamic acid-dihydrodiol dehydrogenase"/>
    <property type="match status" value="1"/>
</dbReference>
<dbReference type="Gene3D" id="3.40.50.720">
    <property type="entry name" value="NAD(P)-binding Rossmann-like Domain"/>
    <property type="match status" value="1"/>
</dbReference>
<dbReference type="InterPro" id="IPR047950">
    <property type="entry name" value="BphB-like_SDR"/>
</dbReference>
<dbReference type="InterPro" id="IPR017711">
    <property type="entry name" value="BphB_TodD"/>
</dbReference>
<dbReference type="InterPro" id="IPR036291">
    <property type="entry name" value="NAD(P)-bd_dom_sf"/>
</dbReference>
<dbReference type="InterPro" id="IPR020904">
    <property type="entry name" value="Sc_DH/Rdtase_CS"/>
</dbReference>
<dbReference type="InterPro" id="IPR002347">
    <property type="entry name" value="SDR_fam"/>
</dbReference>
<dbReference type="NCBIfam" id="TIGR03325">
    <property type="entry name" value="BphB_TodD"/>
    <property type="match status" value="1"/>
</dbReference>
<dbReference type="NCBIfam" id="NF004849">
    <property type="entry name" value="PRK06200.1"/>
    <property type="match status" value="1"/>
</dbReference>
<dbReference type="PANTHER" id="PTHR43669">
    <property type="entry name" value="5-KETO-D-GLUCONATE 5-REDUCTASE"/>
    <property type="match status" value="1"/>
</dbReference>
<dbReference type="PANTHER" id="PTHR43669:SF3">
    <property type="entry name" value="ALCOHOL DEHYDROGENASE, PUTATIVE (AFU_ORTHOLOGUE AFUA_3G03445)-RELATED"/>
    <property type="match status" value="1"/>
</dbReference>
<dbReference type="Pfam" id="PF00106">
    <property type="entry name" value="adh_short"/>
    <property type="match status" value="1"/>
</dbReference>
<dbReference type="PRINTS" id="PR00081">
    <property type="entry name" value="GDHRDH"/>
</dbReference>
<dbReference type="PRINTS" id="PR00080">
    <property type="entry name" value="SDRFAMILY"/>
</dbReference>
<dbReference type="SUPFAM" id="SSF51735">
    <property type="entry name" value="NAD(P)-binding Rossmann-fold domains"/>
    <property type="match status" value="1"/>
</dbReference>
<dbReference type="PROSITE" id="PS00061">
    <property type="entry name" value="ADH_SHORT"/>
    <property type="match status" value="1"/>
</dbReference>